<accession>P9WP02</accession>
<accession>L0T6T1</accession>
<accession>P63929</accession>
<accession>Q11138</accession>
<comment type="function">
    <text evidence="1">Catalyzes a reversible aldol reaction between acetaldehyde and D-glyceraldehyde 3-phosphate to generate 2-deoxy-D-ribose 5-phosphate.</text>
</comment>
<comment type="catalytic activity">
    <reaction evidence="1">
        <text>2-deoxy-D-ribose 5-phosphate = D-glyceraldehyde 3-phosphate + acetaldehyde</text>
        <dbReference type="Rhea" id="RHEA:12821"/>
        <dbReference type="ChEBI" id="CHEBI:15343"/>
        <dbReference type="ChEBI" id="CHEBI:59776"/>
        <dbReference type="ChEBI" id="CHEBI:62877"/>
        <dbReference type="EC" id="4.1.2.4"/>
    </reaction>
</comment>
<comment type="pathway">
    <text evidence="1">Carbohydrate degradation; 2-deoxy-D-ribose 1-phosphate degradation; D-glyceraldehyde 3-phosphate and acetaldehyde from 2-deoxy-alpha-D-ribose 1-phosphate: step 2/2.</text>
</comment>
<comment type="subcellular location">
    <subcellularLocation>
        <location evidence="1">Cytoplasm</location>
    </subcellularLocation>
</comment>
<comment type="similarity">
    <text evidence="1 2">Belongs to the DeoC/FbaB aldolase family. DeoC type 1 subfamily.</text>
</comment>
<gene>
    <name evidence="1" type="primary">deoC</name>
    <name type="ordered locus">MT0496</name>
</gene>
<evidence type="ECO:0000255" key="1">
    <source>
        <dbReference type="HAMAP-Rule" id="MF_00114"/>
    </source>
</evidence>
<evidence type="ECO:0000305" key="2"/>
<sequence>MLGQPTRAQLAALVDHTLLKPETTRADVAALVAEAAELGVYAVCVSPSMVPVAVQAGGVRVAAVTGFPSGKHVSSVKAHEAAAALASGASEIDMVIDIGAALCGDIDAVRSDIEAVRAAAAGAVLKVIVESAVLLGQSNAHTLVDACRAAEDAGADFVKTSTGCHPAGGATVRAVELMAETVGPRLGVKASGGIRTAADAVAMLNAGATRLGLSGTRAVLDGLS</sequence>
<keyword id="KW-0963">Cytoplasm</keyword>
<keyword id="KW-0456">Lyase</keyword>
<keyword id="KW-1185">Reference proteome</keyword>
<keyword id="KW-0704">Schiff base</keyword>
<name>DEOC_MYCTO</name>
<organism>
    <name type="scientific">Mycobacterium tuberculosis (strain CDC 1551 / Oshkosh)</name>
    <dbReference type="NCBI Taxonomy" id="83331"/>
    <lineage>
        <taxon>Bacteria</taxon>
        <taxon>Bacillati</taxon>
        <taxon>Actinomycetota</taxon>
        <taxon>Actinomycetes</taxon>
        <taxon>Mycobacteriales</taxon>
        <taxon>Mycobacteriaceae</taxon>
        <taxon>Mycobacterium</taxon>
        <taxon>Mycobacterium tuberculosis complex</taxon>
    </lineage>
</organism>
<reference key="1">
    <citation type="journal article" date="2002" name="J. Bacteriol.">
        <title>Whole-genome comparison of Mycobacterium tuberculosis clinical and laboratory strains.</title>
        <authorList>
            <person name="Fleischmann R.D."/>
            <person name="Alland D."/>
            <person name="Eisen J.A."/>
            <person name="Carpenter L."/>
            <person name="White O."/>
            <person name="Peterson J.D."/>
            <person name="DeBoy R.T."/>
            <person name="Dodson R.J."/>
            <person name="Gwinn M.L."/>
            <person name="Haft D.H."/>
            <person name="Hickey E.K."/>
            <person name="Kolonay J.F."/>
            <person name="Nelson W.C."/>
            <person name="Umayam L.A."/>
            <person name="Ermolaeva M.D."/>
            <person name="Salzberg S.L."/>
            <person name="Delcher A."/>
            <person name="Utterback T.R."/>
            <person name="Weidman J.F."/>
            <person name="Khouri H.M."/>
            <person name="Gill J."/>
            <person name="Mikula A."/>
            <person name="Bishai W."/>
            <person name="Jacobs W.R. Jr."/>
            <person name="Venter J.C."/>
            <person name="Fraser C.M."/>
        </authorList>
    </citation>
    <scope>NUCLEOTIDE SEQUENCE [LARGE SCALE GENOMIC DNA]</scope>
    <source>
        <strain>CDC 1551 / Oshkosh</strain>
    </source>
</reference>
<proteinExistence type="inferred from homology"/>
<dbReference type="EC" id="4.1.2.4" evidence="1"/>
<dbReference type="EMBL" id="AE000516">
    <property type="protein sequence ID" value="AAK44719.1"/>
    <property type="molecule type" value="Genomic_DNA"/>
</dbReference>
<dbReference type="PIR" id="A70743">
    <property type="entry name" value="A70743"/>
</dbReference>
<dbReference type="RefSeq" id="WP_003402347.1">
    <property type="nucleotide sequence ID" value="NZ_KK341227.1"/>
</dbReference>
<dbReference type="SMR" id="P9WP02"/>
<dbReference type="KEGG" id="mtc:MT0496"/>
<dbReference type="PATRIC" id="fig|83331.31.peg.525"/>
<dbReference type="HOGENOM" id="CLU_053595_0_0_11"/>
<dbReference type="UniPathway" id="UPA00002">
    <property type="reaction ID" value="UER00468"/>
</dbReference>
<dbReference type="Proteomes" id="UP000001020">
    <property type="component" value="Chromosome"/>
</dbReference>
<dbReference type="GO" id="GO:0005737">
    <property type="term" value="C:cytoplasm"/>
    <property type="evidence" value="ECO:0007669"/>
    <property type="project" value="UniProtKB-SubCell"/>
</dbReference>
<dbReference type="GO" id="GO:0004139">
    <property type="term" value="F:deoxyribose-phosphate aldolase activity"/>
    <property type="evidence" value="ECO:0007669"/>
    <property type="project" value="UniProtKB-UniRule"/>
</dbReference>
<dbReference type="GO" id="GO:0006018">
    <property type="term" value="P:2-deoxyribose 1-phosphate catabolic process"/>
    <property type="evidence" value="ECO:0007669"/>
    <property type="project" value="UniProtKB-UniRule"/>
</dbReference>
<dbReference type="GO" id="GO:0016052">
    <property type="term" value="P:carbohydrate catabolic process"/>
    <property type="evidence" value="ECO:0007669"/>
    <property type="project" value="TreeGrafter"/>
</dbReference>
<dbReference type="GO" id="GO:0009264">
    <property type="term" value="P:deoxyribonucleotide catabolic process"/>
    <property type="evidence" value="ECO:0007669"/>
    <property type="project" value="InterPro"/>
</dbReference>
<dbReference type="CDD" id="cd00959">
    <property type="entry name" value="DeoC"/>
    <property type="match status" value="1"/>
</dbReference>
<dbReference type="FunFam" id="3.20.20.70:FF:000044">
    <property type="entry name" value="Deoxyribose-phosphate aldolase"/>
    <property type="match status" value="1"/>
</dbReference>
<dbReference type="Gene3D" id="3.20.20.70">
    <property type="entry name" value="Aldolase class I"/>
    <property type="match status" value="1"/>
</dbReference>
<dbReference type="HAMAP" id="MF_00114">
    <property type="entry name" value="DeoC_type1"/>
    <property type="match status" value="1"/>
</dbReference>
<dbReference type="InterPro" id="IPR013785">
    <property type="entry name" value="Aldolase_TIM"/>
</dbReference>
<dbReference type="InterPro" id="IPR011343">
    <property type="entry name" value="DeoC"/>
</dbReference>
<dbReference type="InterPro" id="IPR002915">
    <property type="entry name" value="DeoC/FbaB/LacD_aldolase"/>
</dbReference>
<dbReference type="InterPro" id="IPR028581">
    <property type="entry name" value="DeoC_typeI"/>
</dbReference>
<dbReference type="NCBIfam" id="TIGR00126">
    <property type="entry name" value="deoC"/>
    <property type="match status" value="1"/>
</dbReference>
<dbReference type="PANTHER" id="PTHR10889">
    <property type="entry name" value="DEOXYRIBOSE-PHOSPHATE ALDOLASE"/>
    <property type="match status" value="1"/>
</dbReference>
<dbReference type="PANTHER" id="PTHR10889:SF1">
    <property type="entry name" value="DEOXYRIBOSE-PHOSPHATE ALDOLASE"/>
    <property type="match status" value="1"/>
</dbReference>
<dbReference type="Pfam" id="PF01791">
    <property type="entry name" value="DeoC"/>
    <property type="match status" value="1"/>
</dbReference>
<dbReference type="PIRSF" id="PIRSF001357">
    <property type="entry name" value="DeoC"/>
    <property type="match status" value="1"/>
</dbReference>
<dbReference type="SMART" id="SM01133">
    <property type="entry name" value="DeoC"/>
    <property type="match status" value="1"/>
</dbReference>
<dbReference type="SUPFAM" id="SSF51569">
    <property type="entry name" value="Aldolase"/>
    <property type="match status" value="1"/>
</dbReference>
<protein>
    <recommendedName>
        <fullName evidence="1">Deoxyribose-phosphate aldolase</fullName>
        <shortName evidence="1">DERA</shortName>
        <ecNumber evidence="1">4.1.2.4</ecNumber>
    </recommendedName>
    <alternativeName>
        <fullName evidence="1">2-deoxy-D-ribose 5-phosphate aldolase</fullName>
    </alternativeName>
    <alternativeName>
        <fullName evidence="1">Phosphodeoxyriboaldolase</fullName>
        <shortName evidence="1">Deoxyriboaldolase</shortName>
    </alternativeName>
</protein>
<feature type="chain" id="PRO_0000427037" description="Deoxyribose-phosphate aldolase">
    <location>
        <begin position="1"/>
        <end position="224"/>
    </location>
</feature>
<feature type="active site" description="Proton donor/acceptor" evidence="1">
    <location>
        <position position="93"/>
    </location>
</feature>
<feature type="active site" description="Schiff-base intermediate with acetaldehyde" evidence="1">
    <location>
        <position position="159"/>
    </location>
</feature>
<feature type="active site" description="Proton donor/acceptor" evidence="1">
    <location>
        <position position="189"/>
    </location>
</feature>